<sequence>MHILTAGVDEAGRGPLVGSVFAAAVILPETFDLPGLTDSKKLSEKKRDALAEMIKEQAVAWHVAASTPEEIASLNILHATMLAMKRAVYGLAARPEKIFIDGNRIPEHLGIPAEAVVKGDSKIIEISAASVLAKTARDAEMYALAQRRPQYGFDKHKGYGTKQHLEALKQYGVLPEHRRDFAPVRNLLAQQALF</sequence>
<comment type="function">
    <text evidence="1">Endonuclease that specifically degrades the RNA of RNA-DNA hybrids.</text>
</comment>
<comment type="catalytic activity">
    <reaction evidence="1">
        <text>Endonucleolytic cleavage to 5'-phosphomonoester.</text>
        <dbReference type="EC" id="3.1.26.4"/>
    </reaction>
</comment>
<comment type="cofactor">
    <cofactor evidence="1">
        <name>Mn(2+)</name>
        <dbReference type="ChEBI" id="CHEBI:29035"/>
    </cofactor>
    <cofactor evidence="1">
        <name>Mg(2+)</name>
        <dbReference type="ChEBI" id="CHEBI:18420"/>
    </cofactor>
    <text evidence="1">Manganese or magnesium. Binds 1 divalent metal ion per monomer in the absence of substrate. May bind a second metal ion after substrate binding.</text>
</comment>
<comment type="subcellular location">
    <subcellularLocation>
        <location evidence="1">Cytoplasm</location>
    </subcellularLocation>
</comment>
<comment type="similarity">
    <text evidence="1">Belongs to the RNase HII family.</text>
</comment>
<gene>
    <name evidence="1" type="primary">rnhB</name>
    <name type="ordered locus">NGO_1789</name>
</gene>
<evidence type="ECO:0000255" key="1">
    <source>
        <dbReference type="HAMAP-Rule" id="MF_00052"/>
    </source>
</evidence>
<evidence type="ECO:0000255" key="2">
    <source>
        <dbReference type="PROSITE-ProRule" id="PRU01319"/>
    </source>
</evidence>
<accession>Q5F5X9</accession>
<name>RNH2_NEIG1</name>
<feature type="chain" id="PRO_0000111593" description="Ribonuclease HII">
    <location>
        <begin position="1"/>
        <end position="194"/>
    </location>
</feature>
<feature type="domain" description="RNase H type-2" evidence="2">
    <location>
        <begin position="3"/>
        <end position="193"/>
    </location>
</feature>
<feature type="binding site" evidence="1">
    <location>
        <position position="9"/>
    </location>
    <ligand>
        <name>a divalent metal cation</name>
        <dbReference type="ChEBI" id="CHEBI:60240"/>
    </ligand>
</feature>
<feature type="binding site" evidence="1">
    <location>
        <position position="10"/>
    </location>
    <ligand>
        <name>a divalent metal cation</name>
        <dbReference type="ChEBI" id="CHEBI:60240"/>
    </ligand>
</feature>
<feature type="binding site" evidence="1">
    <location>
        <position position="101"/>
    </location>
    <ligand>
        <name>a divalent metal cation</name>
        <dbReference type="ChEBI" id="CHEBI:60240"/>
    </ligand>
</feature>
<organism>
    <name type="scientific">Neisseria gonorrhoeae (strain ATCC 700825 / FA 1090)</name>
    <dbReference type="NCBI Taxonomy" id="242231"/>
    <lineage>
        <taxon>Bacteria</taxon>
        <taxon>Pseudomonadati</taxon>
        <taxon>Pseudomonadota</taxon>
        <taxon>Betaproteobacteria</taxon>
        <taxon>Neisseriales</taxon>
        <taxon>Neisseriaceae</taxon>
        <taxon>Neisseria</taxon>
    </lineage>
</organism>
<protein>
    <recommendedName>
        <fullName evidence="1">Ribonuclease HII</fullName>
        <shortName evidence="1">RNase HII</shortName>
        <ecNumber evidence="1">3.1.26.4</ecNumber>
    </recommendedName>
</protein>
<dbReference type="EC" id="3.1.26.4" evidence="1"/>
<dbReference type="EMBL" id="AE004969">
    <property type="protein sequence ID" value="AAW90408.1"/>
    <property type="molecule type" value="Genomic_DNA"/>
</dbReference>
<dbReference type="RefSeq" id="WP_010359364.1">
    <property type="nucleotide sequence ID" value="NC_002946.2"/>
</dbReference>
<dbReference type="RefSeq" id="YP_208820.1">
    <property type="nucleotide sequence ID" value="NC_002946.2"/>
</dbReference>
<dbReference type="SMR" id="Q5F5X9"/>
<dbReference type="STRING" id="242231.NGO_1789"/>
<dbReference type="GeneID" id="66754352"/>
<dbReference type="KEGG" id="ngo:NGO_1789"/>
<dbReference type="PATRIC" id="fig|242231.10.peg.2147"/>
<dbReference type="HOGENOM" id="CLU_036532_3_2_4"/>
<dbReference type="Proteomes" id="UP000000535">
    <property type="component" value="Chromosome"/>
</dbReference>
<dbReference type="GO" id="GO:0005737">
    <property type="term" value="C:cytoplasm"/>
    <property type="evidence" value="ECO:0007669"/>
    <property type="project" value="UniProtKB-SubCell"/>
</dbReference>
<dbReference type="GO" id="GO:0032299">
    <property type="term" value="C:ribonuclease H2 complex"/>
    <property type="evidence" value="ECO:0007669"/>
    <property type="project" value="TreeGrafter"/>
</dbReference>
<dbReference type="GO" id="GO:0030145">
    <property type="term" value="F:manganese ion binding"/>
    <property type="evidence" value="ECO:0007669"/>
    <property type="project" value="UniProtKB-UniRule"/>
</dbReference>
<dbReference type="GO" id="GO:0003723">
    <property type="term" value="F:RNA binding"/>
    <property type="evidence" value="ECO:0007669"/>
    <property type="project" value="InterPro"/>
</dbReference>
<dbReference type="GO" id="GO:0004523">
    <property type="term" value="F:RNA-DNA hybrid ribonuclease activity"/>
    <property type="evidence" value="ECO:0007669"/>
    <property type="project" value="UniProtKB-UniRule"/>
</dbReference>
<dbReference type="GO" id="GO:0043137">
    <property type="term" value="P:DNA replication, removal of RNA primer"/>
    <property type="evidence" value="ECO:0007669"/>
    <property type="project" value="TreeGrafter"/>
</dbReference>
<dbReference type="GO" id="GO:0006298">
    <property type="term" value="P:mismatch repair"/>
    <property type="evidence" value="ECO:0007669"/>
    <property type="project" value="TreeGrafter"/>
</dbReference>
<dbReference type="CDD" id="cd07182">
    <property type="entry name" value="RNase_HII_bacteria_HII_like"/>
    <property type="match status" value="1"/>
</dbReference>
<dbReference type="FunFam" id="3.30.420.10:FF:000006">
    <property type="entry name" value="Ribonuclease HII"/>
    <property type="match status" value="1"/>
</dbReference>
<dbReference type="Gene3D" id="3.30.420.10">
    <property type="entry name" value="Ribonuclease H-like superfamily/Ribonuclease H"/>
    <property type="match status" value="1"/>
</dbReference>
<dbReference type="HAMAP" id="MF_00052_B">
    <property type="entry name" value="RNase_HII_B"/>
    <property type="match status" value="1"/>
</dbReference>
<dbReference type="InterPro" id="IPR022898">
    <property type="entry name" value="RNase_HII"/>
</dbReference>
<dbReference type="InterPro" id="IPR001352">
    <property type="entry name" value="RNase_HII/HIII"/>
</dbReference>
<dbReference type="InterPro" id="IPR024567">
    <property type="entry name" value="RNase_HII/HIII_dom"/>
</dbReference>
<dbReference type="InterPro" id="IPR012337">
    <property type="entry name" value="RNaseH-like_sf"/>
</dbReference>
<dbReference type="InterPro" id="IPR036397">
    <property type="entry name" value="RNaseH_sf"/>
</dbReference>
<dbReference type="NCBIfam" id="NF000595">
    <property type="entry name" value="PRK00015.1-3"/>
    <property type="match status" value="1"/>
</dbReference>
<dbReference type="NCBIfam" id="NF000596">
    <property type="entry name" value="PRK00015.1-4"/>
    <property type="match status" value="1"/>
</dbReference>
<dbReference type="PANTHER" id="PTHR10954">
    <property type="entry name" value="RIBONUCLEASE H2 SUBUNIT A"/>
    <property type="match status" value="1"/>
</dbReference>
<dbReference type="PANTHER" id="PTHR10954:SF18">
    <property type="entry name" value="RIBONUCLEASE HII"/>
    <property type="match status" value="1"/>
</dbReference>
<dbReference type="Pfam" id="PF01351">
    <property type="entry name" value="RNase_HII"/>
    <property type="match status" value="1"/>
</dbReference>
<dbReference type="SUPFAM" id="SSF53098">
    <property type="entry name" value="Ribonuclease H-like"/>
    <property type="match status" value="1"/>
</dbReference>
<dbReference type="PROSITE" id="PS51975">
    <property type="entry name" value="RNASE_H_2"/>
    <property type="match status" value="1"/>
</dbReference>
<proteinExistence type="inferred from homology"/>
<reference key="1">
    <citation type="submission" date="2003-03" db="EMBL/GenBank/DDBJ databases">
        <title>The complete genome sequence of Neisseria gonorrhoeae.</title>
        <authorList>
            <person name="Lewis L.A."/>
            <person name="Gillaspy A.F."/>
            <person name="McLaughlin R.E."/>
            <person name="Gipson M."/>
            <person name="Ducey T.F."/>
            <person name="Ownbey T."/>
            <person name="Hartman K."/>
            <person name="Nydick C."/>
            <person name="Carson M.B."/>
            <person name="Vaughn J."/>
            <person name="Thomson C."/>
            <person name="Song L."/>
            <person name="Lin S."/>
            <person name="Yuan X."/>
            <person name="Najar F."/>
            <person name="Zhan M."/>
            <person name="Ren Q."/>
            <person name="Zhu H."/>
            <person name="Qi S."/>
            <person name="Kenton S.M."/>
            <person name="Lai H."/>
            <person name="White J.D."/>
            <person name="Clifton S."/>
            <person name="Roe B.A."/>
            <person name="Dyer D.W."/>
        </authorList>
    </citation>
    <scope>NUCLEOTIDE SEQUENCE [LARGE SCALE GENOMIC DNA]</scope>
    <source>
        <strain>ATCC 700825 / FA 1090</strain>
    </source>
</reference>
<keyword id="KW-0963">Cytoplasm</keyword>
<keyword id="KW-0255">Endonuclease</keyword>
<keyword id="KW-0378">Hydrolase</keyword>
<keyword id="KW-0464">Manganese</keyword>
<keyword id="KW-0479">Metal-binding</keyword>
<keyword id="KW-0540">Nuclease</keyword>
<keyword id="KW-1185">Reference proteome</keyword>